<evidence type="ECO:0000255" key="1">
    <source>
        <dbReference type="HAMAP-Rule" id="MF_00054"/>
    </source>
</evidence>
<keyword id="KW-0963">Cytoplasm</keyword>
<keyword id="KW-0251">Elongation factor</keyword>
<keyword id="KW-0342">GTP-binding</keyword>
<keyword id="KW-0547">Nucleotide-binding</keyword>
<keyword id="KW-0648">Protein biosynthesis</keyword>
<gene>
    <name evidence="1" type="primary">fusA</name>
    <name type="ordered locus">LCABL_26750</name>
</gene>
<feature type="chain" id="PRO_1000091725" description="Elongation factor G">
    <location>
        <begin position="1"/>
        <end position="700"/>
    </location>
</feature>
<feature type="domain" description="tr-type G">
    <location>
        <begin position="10"/>
        <end position="285"/>
    </location>
</feature>
<feature type="binding site" evidence="1">
    <location>
        <begin position="19"/>
        <end position="26"/>
    </location>
    <ligand>
        <name>GTP</name>
        <dbReference type="ChEBI" id="CHEBI:37565"/>
    </ligand>
</feature>
<feature type="binding site" evidence="1">
    <location>
        <begin position="83"/>
        <end position="87"/>
    </location>
    <ligand>
        <name>GTP</name>
        <dbReference type="ChEBI" id="CHEBI:37565"/>
    </ligand>
</feature>
<feature type="binding site" evidence="1">
    <location>
        <begin position="137"/>
        <end position="140"/>
    </location>
    <ligand>
        <name>GTP</name>
        <dbReference type="ChEBI" id="CHEBI:37565"/>
    </ligand>
</feature>
<comment type="function">
    <text evidence="1">Catalyzes the GTP-dependent ribosomal translocation step during translation elongation. During this step, the ribosome changes from the pre-translocational (PRE) to the post-translocational (POST) state as the newly formed A-site-bound peptidyl-tRNA and P-site-bound deacylated tRNA move to the P and E sites, respectively. Catalyzes the coordinated movement of the two tRNA molecules, the mRNA and conformational changes in the ribosome.</text>
</comment>
<comment type="subcellular location">
    <subcellularLocation>
        <location evidence="1">Cytoplasm</location>
    </subcellularLocation>
</comment>
<comment type="similarity">
    <text evidence="1">Belongs to the TRAFAC class translation factor GTPase superfamily. Classic translation factor GTPase family. EF-G/EF-2 subfamily.</text>
</comment>
<protein>
    <recommendedName>
        <fullName evidence="1">Elongation factor G</fullName>
        <shortName evidence="1">EF-G</shortName>
    </recommendedName>
</protein>
<proteinExistence type="inferred from homology"/>
<name>EFG_LACCB</name>
<dbReference type="EMBL" id="FM177140">
    <property type="protein sequence ID" value="CAQ67741.1"/>
    <property type="molecule type" value="Genomic_DNA"/>
</dbReference>
<dbReference type="SMR" id="B3WAM2"/>
<dbReference type="KEGG" id="lcb:LCABL_26750"/>
<dbReference type="HOGENOM" id="CLU_002794_4_1_9"/>
<dbReference type="GO" id="GO:0005737">
    <property type="term" value="C:cytoplasm"/>
    <property type="evidence" value="ECO:0007669"/>
    <property type="project" value="UniProtKB-SubCell"/>
</dbReference>
<dbReference type="GO" id="GO:0005525">
    <property type="term" value="F:GTP binding"/>
    <property type="evidence" value="ECO:0007669"/>
    <property type="project" value="UniProtKB-UniRule"/>
</dbReference>
<dbReference type="GO" id="GO:0003924">
    <property type="term" value="F:GTPase activity"/>
    <property type="evidence" value="ECO:0007669"/>
    <property type="project" value="InterPro"/>
</dbReference>
<dbReference type="GO" id="GO:0003746">
    <property type="term" value="F:translation elongation factor activity"/>
    <property type="evidence" value="ECO:0007669"/>
    <property type="project" value="UniProtKB-UniRule"/>
</dbReference>
<dbReference type="GO" id="GO:0032790">
    <property type="term" value="P:ribosome disassembly"/>
    <property type="evidence" value="ECO:0007669"/>
    <property type="project" value="TreeGrafter"/>
</dbReference>
<dbReference type="CDD" id="cd01886">
    <property type="entry name" value="EF-G"/>
    <property type="match status" value="1"/>
</dbReference>
<dbReference type="CDD" id="cd16262">
    <property type="entry name" value="EFG_III"/>
    <property type="match status" value="1"/>
</dbReference>
<dbReference type="CDD" id="cd01434">
    <property type="entry name" value="EFG_mtEFG1_IV"/>
    <property type="match status" value="1"/>
</dbReference>
<dbReference type="CDD" id="cd03713">
    <property type="entry name" value="EFG_mtEFG_C"/>
    <property type="match status" value="1"/>
</dbReference>
<dbReference type="CDD" id="cd04088">
    <property type="entry name" value="EFG_mtEFG_II"/>
    <property type="match status" value="1"/>
</dbReference>
<dbReference type="FunFam" id="2.40.30.10:FF:000006">
    <property type="entry name" value="Elongation factor G"/>
    <property type="match status" value="1"/>
</dbReference>
<dbReference type="FunFam" id="3.30.230.10:FF:000003">
    <property type="entry name" value="Elongation factor G"/>
    <property type="match status" value="1"/>
</dbReference>
<dbReference type="FunFam" id="3.30.70.240:FF:000001">
    <property type="entry name" value="Elongation factor G"/>
    <property type="match status" value="1"/>
</dbReference>
<dbReference type="FunFam" id="3.30.70.870:FF:000001">
    <property type="entry name" value="Elongation factor G"/>
    <property type="match status" value="1"/>
</dbReference>
<dbReference type="FunFam" id="3.40.50.300:FF:000029">
    <property type="entry name" value="Elongation factor G"/>
    <property type="match status" value="1"/>
</dbReference>
<dbReference type="Gene3D" id="3.30.230.10">
    <property type="match status" value="1"/>
</dbReference>
<dbReference type="Gene3D" id="3.30.70.240">
    <property type="match status" value="1"/>
</dbReference>
<dbReference type="Gene3D" id="3.30.70.870">
    <property type="entry name" value="Elongation Factor G (Translational Gtpase), domain 3"/>
    <property type="match status" value="1"/>
</dbReference>
<dbReference type="Gene3D" id="3.40.50.300">
    <property type="entry name" value="P-loop containing nucleotide triphosphate hydrolases"/>
    <property type="match status" value="1"/>
</dbReference>
<dbReference type="Gene3D" id="2.40.30.10">
    <property type="entry name" value="Translation factors"/>
    <property type="match status" value="1"/>
</dbReference>
<dbReference type="HAMAP" id="MF_00054_B">
    <property type="entry name" value="EF_G_EF_2_B"/>
    <property type="match status" value="1"/>
</dbReference>
<dbReference type="InterPro" id="IPR053905">
    <property type="entry name" value="EF-G-like_DII"/>
</dbReference>
<dbReference type="InterPro" id="IPR041095">
    <property type="entry name" value="EFG_II"/>
</dbReference>
<dbReference type="InterPro" id="IPR009022">
    <property type="entry name" value="EFG_III"/>
</dbReference>
<dbReference type="InterPro" id="IPR035647">
    <property type="entry name" value="EFG_III/V"/>
</dbReference>
<dbReference type="InterPro" id="IPR047872">
    <property type="entry name" value="EFG_IV"/>
</dbReference>
<dbReference type="InterPro" id="IPR035649">
    <property type="entry name" value="EFG_V"/>
</dbReference>
<dbReference type="InterPro" id="IPR000640">
    <property type="entry name" value="EFG_V-like"/>
</dbReference>
<dbReference type="InterPro" id="IPR031157">
    <property type="entry name" value="G_TR_CS"/>
</dbReference>
<dbReference type="InterPro" id="IPR027417">
    <property type="entry name" value="P-loop_NTPase"/>
</dbReference>
<dbReference type="InterPro" id="IPR020568">
    <property type="entry name" value="Ribosomal_Su5_D2-typ_SF"/>
</dbReference>
<dbReference type="InterPro" id="IPR014721">
    <property type="entry name" value="Ribsml_uS5_D2-typ_fold_subgr"/>
</dbReference>
<dbReference type="InterPro" id="IPR005225">
    <property type="entry name" value="Small_GTP-bd"/>
</dbReference>
<dbReference type="InterPro" id="IPR000795">
    <property type="entry name" value="T_Tr_GTP-bd_dom"/>
</dbReference>
<dbReference type="InterPro" id="IPR009000">
    <property type="entry name" value="Transl_B-barrel_sf"/>
</dbReference>
<dbReference type="InterPro" id="IPR004540">
    <property type="entry name" value="Transl_elong_EFG/EF2"/>
</dbReference>
<dbReference type="InterPro" id="IPR005517">
    <property type="entry name" value="Transl_elong_EFG/EF2_IV"/>
</dbReference>
<dbReference type="NCBIfam" id="TIGR00484">
    <property type="entry name" value="EF-G"/>
    <property type="match status" value="1"/>
</dbReference>
<dbReference type="NCBIfam" id="NF009379">
    <property type="entry name" value="PRK12740.1-3"/>
    <property type="match status" value="1"/>
</dbReference>
<dbReference type="NCBIfam" id="NF009381">
    <property type="entry name" value="PRK12740.1-5"/>
    <property type="match status" value="1"/>
</dbReference>
<dbReference type="NCBIfam" id="TIGR00231">
    <property type="entry name" value="small_GTP"/>
    <property type="match status" value="1"/>
</dbReference>
<dbReference type="PANTHER" id="PTHR43261:SF1">
    <property type="entry name" value="RIBOSOME-RELEASING FACTOR 2, MITOCHONDRIAL"/>
    <property type="match status" value="1"/>
</dbReference>
<dbReference type="PANTHER" id="PTHR43261">
    <property type="entry name" value="TRANSLATION ELONGATION FACTOR G-RELATED"/>
    <property type="match status" value="1"/>
</dbReference>
<dbReference type="Pfam" id="PF22042">
    <property type="entry name" value="EF-G_D2"/>
    <property type="match status" value="1"/>
</dbReference>
<dbReference type="Pfam" id="PF00679">
    <property type="entry name" value="EFG_C"/>
    <property type="match status" value="1"/>
</dbReference>
<dbReference type="Pfam" id="PF14492">
    <property type="entry name" value="EFG_III"/>
    <property type="match status" value="1"/>
</dbReference>
<dbReference type="Pfam" id="PF03764">
    <property type="entry name" value="EFG_IV"/>
    <property type="match status" value="1"/>
</dbReference>
<dbReference type="Pfam" id="PF00009">
    <property type="entry name" value="GTP_EFTU"/>
    <property type="match status" value="1"/>
</dbReference>
<dbReference type="PRINTS" id="PR00315">
    <property type="entry name" value="ELONGATNFCT"/>
</dbReference>
<dbReference type="SMART" id="SM00838">
    <property type="entry name" value="EFG_C"/>
    <property type="match status" value="1"/>
</dbReference>
<dbReference type="SMART" id="SM00889">
    <property type="entry name" value="EFG_IV"/>
    <property type="match status" value="1"/>
</dbReference>
<dbReference type="SUPFAM" id="SSF54980">
    <property type="entry name" value="EF-G C-terminal domain-like"/>
    <property type="match status" value="2"/>
</dbReference>
<dbReference type="SUPFAM" id="SSF52540">
    <property type="entry name" value="P-loop containing nucleoside triphosphate hydrolases"/>
    <property type="match status" value="1"/>
</dbReference>
<dbReference type="SUPFAM" id="SSF54211">
    <property type="entry name" value="Ribosomal protein S5 domain 2-like"/>
    <property type="match status" value="1"/>
</dbReference>
<dbReference type="SUPFAM" id="SSF50447">
    <property type="entry name" value="Translation proteins"/>
    <property type="match status" value="1"/>
</dbReference>
<dbReference type="PROSITE" id="PS00301">
    <property type="entry name" value="G_TR_1"/>
    <property type="match status" value="1"/>
</dbReference>
<dbReference type="PROSITE" id="PS51722">
    <property type="entry name" value="G_TR_2"/>
    <property type="match status" value="1"/>
</dbReference>
<accession>B3WAM2</accession>
<reference key="1">
    <citation type="submission" date="2008-06" db="EMBL/GenBank/DDBJ databases">
        <title>Lactobacillus casei BL23 complete genome sequence.</title>
        <authorList>
            <person name="Maze A."/>
            <person name="Boel G."/>
            <person name="Bourand A."/>
            <person name="Loux V."/>
            <person name="Gibrat J.F."/>
            <person name="Zuniga M."/>
            <person name="Hartke A."/>
            <person name="Deutscher J."/>
        </authorList>
    </citation>
    <scope>NUCLEOTIDE SEQUENCE [LARGE SCALE GENOMIC DNA]</scope>
    <source>
        <strain>BL23</strain>
    </source>
</reference>
<sequence length="700" mass="76861">MANKREFPLDRTRNIGIMAHIDAGKTTTTERILYYTGKIHKIGETHEGASQMDWMPQEQERGITITSAATTAFWKDHRVNIIDTPGHVDFTIEVERSLRVLDGAITVLDAQSGVEPQTENVWRQATTYGVPRLVFVNKMDKIGADFDYSMTTLHDRLQANAHAVQMPIGAEDKFEGVIDLIEMKADLYDEDELGTKWDTVDVPDDYKEAAQKAHNDLIEAVADVDDGIMDKYLEGEEISNAELKAAIRKATINLEFYPVLAGSAFKNKGVQMLLDAVIDYLPSPLDVRPYHATDPDTGDAVELTAGDDKPFAALAFKVATDPFVGRLTYIRVYSGTLEAGSYVLNATKDNRERVGRLLQMHSNHREEIPEVFSGDIAAAIGLKNTTTGDSLTDVDHPLILESLDVPDPVIQVSIEPDSKEDQDKLDVGLQKLSEEDPTFKAETNPETGETLIAGMGELHLDIMVDRLKREFKVAAKVGEPQVAYRETFTKETSAQGKFVRQSGGKGQYGDVWIEFTPNEEGKGFEFENAIVGGVVPREYIPAVEQGLKEAMANGVLAGYPLIDVKAKLYDGSYHEVDSSEAAFKVAASMALKNASKSAGAVILEPIMHVEVVAPEEYLGDVMGQITARRGRVEGMEARGNAQLVNSMVPLAEMFGYATTLRSATQGRGTFTMTFDHYEAVPKSIQAEIIKKNGGGVATKD</sequence>
<organism>
    <name type="scientific">Lacticaseibacillus casei (strain BL23)</name>
    <name type="common">Lactobacillus casei</name>
    <dbReference type="NCBI Taxonomy" id="543734"/>
    <lineage>
        <taxon>Bacteria</taxon>
        <taxon>Bacillati</taxon>
        <taxon>Bacillota</taxon>
        <taxon>Bacilli</taxon>
        <taxon>Lactobacillales</taxon>
        <taxon>Lactobacillaceae</taxon>
        <taxon>Lacticaseibacillus</taxon>
    </lineage>
</organism>